<name>RS3_STRPG</name>
<evidence type="ECO:0000255" key="1">
    <source>
        <dbReference type="HAMAP-Rule" id="MF_01309"/>
    </source>
</evidence>
<evidence type="ECO:0000305" key="2"/>
<dbReference type="EMBL" id="AM295007">
    <property type="protein sequence ID" value="CAM29392.1"/>
    <property type="molecule type" value="Genomic_DNA"/>
</dbReference>
<dbReference type="RefSeq" id="WP_000529929.1">
    <property type="nucleotide sequence ID" value="NC_009332.1"/>
</dbReference>
<dbReference type="SMR" id="A2RC20"/>
<dbReference type="GeneID" id="69900032"/>
<dbReference type="KEGG" id="spf:SpyM50050"/>
<dbReference type="HOGENOM" id="CLU_058591_0_2_9"/>
<dbReference type="GO" id="GO:0022627">
    <property type="term" value="C:cytosolic small ribosomal subunit"/>
    <property type="evidence" value="ECO:0007669"/>
    <property type="project" value="TreeGrafter"/>
</dbReference>
<dbReference type="GO" id="GO:0003729">
    <property type="term" value="F:mRNA binding"/>
    <property type="evidence" value="ECO:0007669"/>
    <property type="project" value="UniProtKB-UniRule"/>
</dbReference>
<dbReference type="GO" id="GO:0019843">
    <property type="term" value="F:rRNA binding"/>
    <property type="evidence" value="ECO:0007669"/>
    <property type="project" value="UniProtKB-UniRule"/>
</dbReference>
<dbReference type="GO" id="GO:0003735">
    <property type="term" value="F:structural constituent of ribosome"/>
    <property type="evidence" value="ECO:0007669"/>
    <property type="project" value="InterPro"/>
</dbReference>
<dbReference type="GO" id="GO:0006412">
    <property type="term" value="P:translation"/>
    <property type="evidence" value="ECO:0007669"/>
    <property type="project" value="UniProtKB-UniRule"/>
</dbReference>
<dbReference type="CDD" id="cd02412">
    <property type="entry name" value="KH-II_30S_S3"/>
    <property type="match status" value="1"/>
</dbReference>
<dbReference type="FunFam" id="3.30.1140.32:FF:000001">
    <property type="entry name" value="30S ribosomal protein S3"/>
    <property type="match status" value="1"/>
</dbReference>
<dbReference type="FunFam" id="3.30.300.20:FF:000001">
    <property type="entry name" value="30S ribosomal protein S3"/>
    <property type="match status" value="1"/>
</dbReference>
<dbReference type="Gene3D" id="3.30.300.20">
    <property type="match status" value="1"/>
</dbReference>
<dbReference type="Gene3D" id="3.30.1140.32">
    <property type="entry name" value="Ribosomal protein S3, C-terminal domain"/>
    <property type="match status" value="1"/>
</dbReference>
<dbReference type="HAMAP" id="MF_01309_B">
    <property type="entry name" value="Ribosomal_uS3_B"/>
    <property type="match status" value="1"/>
</dbReference>
<dbReference type="InterPro" id="IPR004087">
    <property type="entry name" value="KH_dom"/>
</dbReference>
<dbReference type="InterPro" id="IPR015946">
    <property type="entry name" value="KH_dom-like_a/b"/>
</dbReference>
<dbReference type="InterPro" id="IPR004044">
    <property type="entry name" value="KH_dom_type_2"/>
</dbReference>
<dbReference type="InterPro" id="IPR009019">
    <property type="entry name" value="KH_sf_prok-type"/>
</dbReference>
<dbReference type="InterPro" id="IPR036419">
    <property type="entry name" value="Ribosomal_S3_C_sf"/>
</dbReference>
<dbReference type="InterPro" id="IPR005704">
    <property type="entry name" value="Ribosomal_uS3_bac-typ"/>
</dbReference>
<dbReference type="InterPro" id="IPR001351">
    <property type="entry name" value="Ribosomal_uS3_C"/>
</dbReference>
<dbReference type="InterPro" id="IPR018280">
    <property type="entry name" value="Ribosomal_uS3_CS"/>
</dbReference>
<dbReference type="NCBIfam" id="TIGR01009">
    <property type="entry name" value="rpsC_bact"/>
    <property type="match status" value="1"/>
</dbReference>
<dbReference type="PANTHER" id="PTHR11760">
    <property type="entry name" value="30S/40S RIBOSOMAL PROTEIN S3"/>
    <property type="match status" value="1"/>
</dbReference>
<dbReference type="PANTHER" id="PTHR11760:SF19">
    <property type="entry name" value="SMALL RIBOSOMAL SUBUNIT PROTEIN US3C"/>
    <property type="match status" value="1"/>
</dbReference>
<dbReference type="Pfam" id="PF07650">
    <property type="entry name" value="KH_2"/>
    <property type="match status" value="1"/>
</dbReference>
<dbReference type="Pfam" id="PF00189">
    <property type="entry name" value="Ribosomal_S3_C"/>
    <property type="match status" value="1"/>
</dbReference>
<dbReference type="SMART" id="SM00322">
    <property type="entry name" value="KH"/>
    <property type="match status" value="1"/>
</dbReference>
<dbReference type="SUPFAM" id="SSF54814">
    <property type="entry name" value="Prokaryotic type KH domain (KH-domain type II)"/>
    <property type="match status" value="1"/>
</dbReference>
<dbReference type="SUPFAM" id="SSF54821">
    <property type="entry name" value="Ribosomal protein S3 C-terminal domain"/>
    <property type="match status" value="1"/>
</dbReference>
<dbReference type="PROSITE" id="PS50823">
    <property type="entry name" value="KH_TYPE_2"/>
    <property type="match status" value="1"/>
</dbReference>
<dbReference type="PROSITE" id="PS00548">
    <property type="entry name" value="RIBOSOMAL_S3"/>
    <property type="match status" value="1"/>
</dbReference>
<keyword id="KW-0687">Ribonucleoprotein</keyword>
<keyword id="KW-0689">Ribosomal protein</keyword>
<keyword id="KW-0694">RNA-binding</keyword>
<keyword id="KW-0699">rRNA-binding</keyword>
<gene>
    <name evidence="1" type="primary">rpsC</name>
    <name type="ordered locus">SpyM50050</name>
</gene>
<feature type="chain" id="PRO_0000293898" description="Small ribosomal subunit protein uS3">
    <location>
        <begin position="1"/>
        <end position="217"/>
    </location>
</feature>
<feature type="domain" description="KH type-2" evidence="1">
    <location>
        <begin position="38"/>
        <end position="106"/>
    </location>
</feature>
<reference key="1">
    <citation type="journal article" date="2007" name="J. Bacteriol.">
        <title>Complete genome of acute rheumatic fever-associated serotype M5 Streptococcus pyogenes strain Manfredo.</title>
        <authorList>
            <person name="Holden M.T.G."/>
            <person name="Scott A."/>
            <person name="Cherevach I."/>
            <person name="Chillingworth T."/>
            <person name="Churcher C."/>
            <person name="Cronin A."/>
            <person name="Dowd L."/>
            <person name="Feltwell T."/>
            <person name="Hamlin N."/>
            <person name="Holroyd S."/>
            <person name="Jagels K."/>
            <person name="Moule S."/>
            <person name="Mungall K."/>
            <person name="Quail M.A."/>
            <person name="Price C."/>
            <person name="Rabbinowitsch E."/>
            <person name="Sharp S."/>
            <person name="Skelton J."/>
            <person name="Whitehead S."/>
            <person name="Barrell B.G."/>
            <person name="Kehoe M."/>
            <person name="Parkhill J."/>
        </authorList>
    </citation>
    <scope>NUCLEOTIDE SEQUENCE [LARGE SCALE GENOMIC DNA]</scope>
    <source>
        <strain>Manfredo</strain>
    </source>
</reference>
<proteinExistence type="inferred from homology"/>
<protein>
    <recommendedName>
        <fullName evidence="1">Small ribosomal subunit protein uS3</fullName>
    </recommendedName>
    <alternativeName>
        <fullName evidence="2">30S ribosomal protein S3</fullName>
    </alternativeName>
</protein>
<sequence length="217" mass="24134">MGQKVHPIGMRVGIIRDWDAKWYAEKEYADYLHEDLAIRKFINKELADASVSTIEIERAVNKVIVSLHTAKPGMVIGKGGANVDALRGQLNKLTGKQVHINIIEIKQPDLDAHLVGENIARQLEQRVAFRRAQKQAIQRTMRAGAKGIKTQVSGRLNGADIARAEGYSEGTVPLHTLRADIDYAWEEADTTYGKLGVKVWIYRGEVLPARKNTKGGK</sequence>
<comment type="function">
    <text evidence="1">Binds the lower part of the 30S subunit head. Binds mRNA in the 70S ribosome, positioning it for translation.</text>
</comment>
<comment type="subunit">
    <text evidence="1">Part of the 30S ribosomal subunit. Forms a tight complex with proteins S10 and S14.</text>
</comment>
<comment type="similarity">
    <text evidence="1">Belongs to the universal ribosomal protein uS3 family.</text>
</comment>
<accession>A2RC20</accession>
<organism>
    <name type="scientific">Streptococcus pyogenes serotype M5 (strain Manfredo)</name>
    <dbReference type="NCBI Taxonomy" id="160491"/>
    <lineage>
        <taxon>Bacteria</taxon>
        <taxon>Bacillati</taxon>
        <taxon>Bacillota</taxon>
        <taxon>Bacilli</taxon>
        <taxon>Lactobacillales</taxon>
        <taxon>Streptococcaceae</taxon>
        <taxon>Streptococcus</taxon>
    </lineage>
</organism>